<reference key="1">
    <citation type="submission" date="2006-08" db="EMBL/GenBank/DDBJ databases">
        <title>Complete sequence of Maricaulis maris MCS10.</title>
        <authorList>
            <consortium name="US DOE Joint Genome Institute"/>
            <person name="Copeland A."/>
            <person name="Lucas S."/>
            <person name="Lapidus A."/>
            <person name="Barry K."/>
            <person name="Detter J.C."/>
            <person name="Glavina del Rio T."/>
            <person name="Hammon N."/>
            <person name="Israni S."/>
            <person name="Dalin E."/>
            <person name="Tice H."/>
            <person name="Pitluck S."/>
            <person name="Saunders E."/>
            <person name="Brettin T."/>
            <person name="Bruce D."/>
            <person name="Han C."/>
            <person name="Tapia R."/>
            <person name="Gilna P."/>
            <person name="Schmutz J."/>
            <person name="Larimer F."/>
            <person name="Land M."/>
            <person name="Hauser L."/>
            <person name="Kyrpides N."/>
            <person name="Mikhailova N."/>
            <person name="Viollier P."/>
            <person name="Stephens C."/>
            <person name="Richardson P."/>
        </authorList>
    </citation>
    <scope>NUCLEOTIDE SEQUENCE [LARGE SCALE GENOMIC DNA]</scope>
    <source>
        <strain>MCS10</strain>
    </source>
</reference>
<keyword id="KW-1185">Reference proteome</keyword>
<keyword id="KW-0687">Ribonucleoprotein</keyword>
<keyword id="KW-0689">Ribosomal protein</keyword>
<keyword id="KW-0694">RNA-binding</keyword>
<keyword id="KW-0699">rRNA-binding</keyword>
<feature type="chain" id="PRO_0000266502" description="Large ribosomal subunit protein uL14">
    <location>
        <begin position="1"/>
        <end position="122"/>
    </location>
</feature>
<gene>
    <name evidence="1" type="primary">rplN</name>
    <name type="ordered locus">Mmar10_1785</name>
</gene>
<accession>Q0ANR0</accession>
<sequence length="122" mass="13403">MIQMQTNLDVADNSGARRVQCIKVLGGAKRRYAHVGDIIVVSVKEAIPRGRVKKGDVRKAVVVRVAKDIQRKDGSVIRFDGNAAVIINNNNEPLGTRIFGPVPRELRAKNHMKIVSLAPEVL</sequence>
<organism>
    <name type="scientific">Maricaulis maris (strain MCS10)</name>
    <name type="common">Caulobacter maris</name>
    <dbReference type="NCBI Taxonomy" id="394221"/>
    <lineage>
        <taxon>Bacteria</taxon>
        <taxon>Pseudomonadati</taxon>
        <taxon>Pseudomonadota</taxon>
        <taxon>Alphaproteobacteria</taxon>
        <taxon>Maricaulales</taxon>
        <taxon>Maricaulaceae</taxon>
        <taxon>Maricaulis</taxon>
    </lineage>
</organism>
<evidence type="ECO:0000255" key="1">
    <source>
        <dbReference type="HAMAP-Rule" id="MF_01367"/>
    </source>
</evidence>
<evidence type="ECO:0000305" key="2"/>
<comment type="function">
    <text evidence="1">Binds to 23S rRNA. Forms part of two intersubunit bridges in the 70S ribosome.</text>
</comment>
<comment type="subunit">
    <text evidence="1">Part of the 50S ribosomal subunit. Forms a cluster with proteins L3 and L19. In the 70S ribosome, L14 and L19 interact and together make contacts with the 16S rRNA in bridges B5 and B8.</text>
</comment>
<comment type="similarity">
    <text evidence="1">Belongs to the universal ribosomal protein uL14 family.</text>
</comment>
<name>RL14_MARMM</name>
<protein>
    <recommendedName>
        <fullName evidence="1">Large ribosomal subunit protein uL14</fullName>
    </recommendedName>
    <alternativeName>
        <fullName evidence="2">50S ribosomal protein L14</fullName>
    </alternativeName>
</protein>
<dbReference type="EMBL" id="CP000449">
    <property type="protein sequence ID" value="ABI66077.1"/>
    <property type="molecule type" value="Genomic_DNA"/>
</dbReference>
<dbReference type="RefSeq" id="WP_011643723.1">
    <property type="nucleotide sequence ID" value="NC_008347.1"/>
</dbReference>
<dbReference type="SMR" id="Q0ANR0"/>
<dbReference type="STRING" id="394221.Mmar10_1785"/>
<dbReference type="KEGG" id="mmr:Mmar10_1785"/>
<dbReference type="eggNOG" id="COG0093">
    <property type="taxonomic scope" value="Bacteria"/>
</dbReference>
<dbReference type="HOGENOM" id="CLU_095071_2_1_5"/>
<dbReference type="OrthoDB" id="9806379at2"/>
<dbReference type="Proteomes" id="UP000001964">
    <property type="component" value="Chromosome"/>
</dbReference>
<dbReference type="GO" id="GO:0022625">
    <property type="term" value="C:cytosolic large ribosomal subunit"/>
    <property type="evidence" value="ECO:0007669"/>
    <property type="project" value="TreeGrafter"/>
</dbReference>
<dbReference type="GO" id="GO:0070180">
    <property type="term" value="F:large ribosomal subunit rRNA binding"/>
    <property type="evidence" value="ECO:0007669"/>
    <property type="project" value="TreeGrafter"/>
</dbReference>
<dbReference type="GO" id="GO:0003735">
    <property type="term" value="F:structural constituent of ribosome"/>
    <property type="evidence" value="ECO:0007669"/>
    <property type="project" value="InterPro"/>
</dbReference>
<dbReference type="GO" id="GO:0006412">
    <property type="term" value="P:translation"/>
    <property type="evidence" value="ECO:0007669"/>
    <property type="project" value="UniProtKB-UniRule"/>
</dbReference>
<dbReference type="CDD" id="cd00337">
    <property type="entry name" value="Ribosomal_uL14"/>
    <property type="match status" value="1"/>
</dbReference>
<dbReference type="FunFam" id="2.40.150.20:FF:000001">
    <property type="entry name" value="50S ribosomal protein L14"/>
    <property type="match status" value="1"/>
</dbReference>
<dbReference type="Gene3D" id="2.40.150.20">
    <property type="entry name" value="Ribosomal protein L14"/>
    <property type="match status" value="1"/>
</dbReference>
<dbReference type="HAMAP" id="MF_01367">
    <property type="entry name" value="Ribosomal_uL14"/>
    <property type="match status" value="1"/>
</dbReference>
<dbReference type="InterPro" id="IPR000218">
    <property type="entry name" value="Ribosomal_uL14"/>
</dbReference>
<dbReference type="InterPro" id="IPR005745">
    <property type="entry name" value="Ribosomal_uL14_bac-type"/>
</dbReference>
<dbReference type="InterPro" id="IPR019972">
    <property type="entry name" value="Ribosomal_uL14_CS"/>
</dbReference>
<dbReference type="InterPro" id="IPR036853">
    <property type="entry name" value="Ribosomal_uL14_sf"/>
</dbReference>
<dbReference type="NCBIfam" id="TIGR01067">
    <property type="entry name" value="rplN_bact"/>
    <property type="match status" value="1"/>
</dbReference>
<dbReference type="PANTHER" id="PTHR11761">
    <property type="entry name" value="50S/60S RIBOSOMAL PROTEIN L14/L23"/>
    <property type="match status" value="1"/>
</dbReference>
<dbReference type="PANTHER" id="PTHR11761:SF3">
    <property type="entry name" value="LARGE RIBOSOMAL SUBUNIT PROTEIN UL14M"/>
    <property type="match status" value="1"/>
</dbReference>
<dbReference type="Pfam" id="PF00238">
    <property type="entry name" value="Ribosomal_L14"/>
    <property type="match status" value="1"/>
</dbReference>
<dbReference type="SMART" id="SM01374">
    <property type="entry name" value="Ribosomal_L14"/>
    <property type="match status" value="1"/>
</dbReference>
<dbReference type="SUPFAM" id="SSF50193">
    <property type="entry name" value="Ribosomal protein L14"/>
    <property type="match status" value="1"/>
</dbReference>
<dbReference type="PROSITE" id="PS00049">
    <property type="entry name" value="RIBOSOMAL_L14"/>
    <property type="match status" value="1"/>
</dbReference>
<proteinExistence type="inferred from homology"/>